<sequence>MFDSTLNPLWQRYILAVQEEVKPALGCTEPISLALAAAVAAAELEGPVERVEAWVSPNLMKNGLGVTVPGTGMVGLPIAAALGALGGNANAGLEVLKDATAQAIADAKALLAAGKVSVKIQEPCNEILFSRAKVWNGEKWACVTIVGGHTNIVHIETHNSVVFTQQACVAEGEQESPLTVLSRTTLAEILKFVNEVPFAAIRFILDSAKLNCALSQEGLSGKWGLHIGATLEKQCERGLLAKDLSSSIVIRTSAASDARMGGATLPAMSNSGSGNQGITATMPVVVVAEHFGADDERLARALMLSHLSAIYIHNQLPRLSALCAATTAAMGAAAGMAWLVDGRYETISMAISSMIGDVSGMICDGASNSCAMKVSTSASAAWKAVLMALDDTAVTGNEGIVAHDVEQSIANLCALASHSMQQTDRQIIEIMASKAR</sequence>
<name>YHAM_SHIBS</name>
<proteinExistence type="inferred from homology"/>
<reference key="1">
    <citation type="journal article" date="2005" name="Nucleic Acids Res.">
        <title>Genome dynamics and diversity of Shigella species, the etiologic agents of bacillary dysentery.</title>
        <authorList>
            <person name="Yang F."/>
            <person name="Yang J."/>
            <person name="Zhang X."/>
            <person name="Chen L."/>
            <person name="Jiang Y."/>
            <person name="Yan Y."/>
            <person name="Tang X."/>
            <person name="Wang J."/>
            <person name="Xiong Z."/>
            <person name="Dong J."/>
            <person name="Xue Y."/>
            <person name="Zhu Y."/>
            <person name="Xu X."/>
            <person name="Sun L."/>
            <person name="Chen S."/>
            <person name="Nie H."/>
            <person name="Peng J."/>
            <person name="Xu J."/>
            <person name="Wang Y."/>
            <person name="Yuan Z."/>
            <person name="Wen Y."/>
            <person name="Yao Z."/>
            <person name="Shen Y."/>
            <person name="Qiang B."/>
            <person name="Hou Y."/>
            <person name="Yu J."/>
            <person name="Jin Q."/>
        </authorList>
    </citation>
    <scope>NUCLEOTIDE SEQUENCE [LARGE SCALE GENOMIC DNA]</scope>
    <source>
        <strain>Sb227</strain>
    </source>
</reference>
<dbReference type="EMBL" id="CP000036">
    <property type="protein sequence ID" value="ABB67488.1"/>
    <property type="molecule type" value="Genomic_DNA"/>
</dbReference>
<dbReference type="SMR" id="Q31WS0"/>
<dbReference type="KEGG" id="sbo:SBO_2975"/>
<dbReference type="HOGENOM" id="CLU_051840_0_0_6"/>
<dbReference type="Proteomes" id="UP000007067">
    <property type="component" value="Chromosome"/>
</dbReference>
<dbReference type="GO" id="GO:0080146">
    <property type="term" value="F:L-cysteine desulfhydrase activity"/>
    <property type="evidence" value="ECO:0007669"/>
    <property type="project" value="TreeGrafter"/>
</dbReference>
<dbReference type="GO" id="GO:0019450">
    <property type="term" value="P:L-cysteine catabolic process to pyruvate"/>
    <property type="evidence" value="ECO:0007669"/>
    <property type="project" value="TreeGrafter"/>
</dbReference>
<dbReference type="HAMAP" id="MF_01845">
    <property type="entry name" value="UPF0597"/>
    <property type="match status" value="1"/>
</dbReference>
<dbReference type="InterPro" id="IPR005130">
    <property type="entry name" value="Ser_deHydtase-like_asu"/>
</dbReference>
<dbReference type="InterPro" id="IPR021144">
    <property type="entry name" value="UPF0597"/>
</dbReference>
<dbReference type="PANTHER" id="PTHR30501">
    <property type="entry name" value="UPF0597 PROTEIN YHAM"/>
    <property type="match status" value="1"/>
</dbReference>
<dbReference type="PANTHER" id="PTHR30501:SF2">
    <property type="entry name" value="UPF0597 PROTEIN YHAM"/>
    <property type="match status" value="1"/>
</dbReference>
<dbReference type="Pfam" id="PF03313">
    <property type="entry name" value="SDH_alpha"/>
    <property type="match status" value="1"/>
</dbReference>
<dbReference type="PIRSF" id="PIRSF006054">
    <property type="entry name" value="UCP006054"/>
    <property type="match status" value="1"/>
</dbReference>
<organism>
    <name type="scientific">Shigella boydii serotype 4 (strain Sb227)</name>
    <dbReference type="NCBI Taxonomy" id="300268"/>
    <lineage>
        <taxon>Bacteria</taxon>
        <taxon>Pseudomonadati</taxon>
        <taxon>Pseudomonadota</taxon>
        <taxon>Gammaproteobacteria</taxon>
        <taxon>Enterobacterales</taxon>
        <taxon>Enterobacteriaceae</taxon>
        <taxon>Shigella</taxon>
    </lineage>
</organism>
<gene>
    <name evidence="1" type="primary">yhaM</name>
    <name type="ordered locus">SBO_2975</name>
</gene>
<accession>Q31WS0</accession>
<evidence type="ECO:0000255" key="1">
    <source>
        <dbReference type="HAMAP-Rule" id="MF_01845"/>
    </source>
</evidence>
<protein>
    <recommendedName>
        <fullName evidence="1">UPF0597 protein YhaM</fullName>
    </recommendedName>
</protein>
<comment type="similarity">
    <text evidence="1">Belongs to the UPF0597 family.</text>
</comment>
<feature type="chain" id="PRO_0000339857" description="UPF0597 protein YhaM">
    <location>
        <begin position="1"/>
        <end position="436"/>
    </location>
</feature>